<reference key="1">
    <citation type="journal article" date="2009" name="PLoS ONE">
        <title>Non mycobacterial virulence genes in the genome of the emerging pathogen Mycobacterium abscessus.</title>
        <authorList>
            <person name="Ripoll F."/>
            <person name="Pasek S."/>
            <person name="Schenowitz C."/>
            <person name="Dossat C."/>
            <person name="Barbe V."/>
            <person name="Rottman M."/>
            <person name="Macheras E."/>
            <person name="Heym B."/>
            <person name="Herrmann J.L."/>
            <person name="Daffe M."/>
            <person name="Brosch R."/>
            <person name="Risler J.L."/>
            <person name="Gaillard J.L."/>
        </authorList>
    </citation>
    <scope>NUCLEOTIDE SEQUENCE [LARGE SCALE GENOMIC DNA]</scope>
    <source>
        <strain>ATCC 19977 / DSM 44196 / CCUG 20993 / CIP 104536 / JCM 13569 / NCTC 13031 / TMC 1543 / L948</strain>
    </source>
</reference>
<keyword id="KW-0028">Amino-acid biosynthesis</keyword>
<keyword id="KW-0055">Arginine biosynthesis</keyword>
<keyword id="KW-0963">Cytoplasm</keyword>
<keyword id="KW-0456">Lyase</keyword>
<keyword id="KW-1185">Reference proteome</keyword>
<sequence>MSTNEGSLWGGRFAGGPAPALAALSKSTHFDWALAPYDIQASVAHARVLRKAGLLTDEQLGALVEGLEQLGRDVASGVFVPADTDEDVHGALERGLIERVGPDIGGRLRAGRSRNDQVATLFRMWLRDAAGRISEGVLDVVQALADQAGAHPDAIMPGKTHLQAAQPVLLAHHLLAHAQPLLRDVDRLVDWDRRTAVSPYGAGALAGSSLGLDPDAIALDLGFTAAADNSIDATSSRDFAAEAGFVFAMIGIDLSRLSEDIILWGTTEFGYVTLDDSWSTGSSIMPQKKNPDIAELARGKTGRLIGNLTGLLATLKAQPLAYNRDLQEDKEPLFDSVSQLELLLPAMAGLVATLRFHTERMAQLAPAGFTLATDLAEWMVRQGIPFRVAHEAAGEAVRVAEARGVGLEDLTDEEFAAIHPELTGDVRAVLTTAGSVASRDARGGTAPERVAEQRELVLARLNVLRGQNGRHPG</sequence>
<gene>
    <name evidence="1" type="primary">argH</name>
    <name type="ordered locus">MAB_2343</name>
</gene>
<comment type="catalytic activity">
    <reaction evidence="1">
        <text>2-(N(omega)-L-arginino)succinate = fumarate + L-arginine</text>
        <dbReference type="Rhea" id="RHEA:24020"/>
        <dbReference type="ChEBI" id="CHEBI:29806"/>
        <dbReference type="ChEBI" id="CHEBI:32682"/>
        <dbReference type="ChEBI" id="CHEBI:57472"/>
        <dbReference type="EC" id="4.3.2.1"/>
    </reaction>
</comment>
<comment type="pathway">
    <text evidence="1">Amino-acid biosynthesis; L-arginine biosynthesis; L-arginine from L-ornithine and carbamoyl phosphate: step 3/3.</text>
</comment>
<comment type="subcellular location">
    <subcellularLocation>
        <location evidence="1">Cytoplasm</location>
    </subcellularLocation>
</comment>
<comment type="similarity">
    <text evidence="1">Belongs to the lyase 1 family. Argininosuccinate lyase subfamily.</text>
</comment>
<protein>
    <recommendedName>
        <fullName evidence="1">Argininosuccinate lyase</fullName>
        <shortName evidence="1">ASAL</shortName>
        <ecNumber evidence="1">4.3.2.1</ecNumber>
    </recommendedName>
    <alternativeName>
        <fullName evidence="1">Arginosuccinase</fullName>
    </alternativeName>
</protein>
<accession>B1MB03</accession>
<evidence type="ECO:0000255" key="1">
    <source>
        <dbReference type="HAMAP-Rule" id="MF_00006"/>
    </source>
</evidence>
<name>ARLY_MYCA9</name>
<organism>
    <name type="scientific">Mycobacteroides abscessus (strain ATCC 19977 / DSM 44196 / CCUG 20993 / CIP 104536 / JCM 13569 / NCTC 13031 / TMC 1543 / L948)</name>
    <name type="common">Mycobacterium abscessus</name>
    <dbReference type="NCBI Taxonomy" id="561007"/>
    <lineage>
        <taxon>Bacteria</taxon>
        <taxon>Bacillati</taxon>
        <taxon>Actinomycetota</taxon>
        <taxon>Actinomycetes</taxon>
        <taxon>Mycobacteriales</taxon>
        <taxon>Mycobacteriaceae</taxon>
        <taxon>Mycobacteroides</taxon>
        <taxon>Mycobacteroides abscessus</taxon>
    </lineage>
</organism>
<dbReference type="EC" id="4.3.2.1" evidence="1"/>
<dbReference type="EMBL" id="CU458896">
    <property type="protein sequence ID" value="CAM62424.1"/>
    <property type="molecule type" value="Genomic_DNA"/>
</dbReference>
<dbReference type="RefSeq" id="WP_005110848.1">
    <property type="nucleotide sequence ID" value="NZ_MLCG01000006.1"/>
</dbReference>
<dbReference type="SMR" id="B1MB03"/>
<dbReference type="GeneID" id="93379281"/>
<dbReference type="KEGG" id="mab:MAB_2343"/>
<dbReference type="UniPathway" id="UPA00068">
    <property type="reaction ID" value="UER00114"/>
</dbReference>
<dbReference type="Proteomes" id="UP000007137">
    <property type="component" value="Chromosome"/>
</dbReference>
<dbReference type="GO" id="GO:0005829">
    <property type="term" value="C:cytosol"/>
    <property type="evidence" value="ECO:0007669"/>
    <property type="project" value="TreeGrafter"/>
</dbReference>
<dbReference type="GO" id="GO:0004056">
    <property type="term" value="F:argininosuccinate lyase activity"/>
    <property type="evidence" value="ECO:0007669"/>
    <property type="project" value="UniProtKB-UniRule"/>
</dbReference>
<dbReference type="GO" id="GO:0042450">
    <property type="term" value="P:arginine biosynthetic process via ornithine"/>
    <property type="evidence" value="ECO:0007669"/>
    <property type="project" value="InterPro"/>
</dbReference>
<dbReference type="GO" id="GO:0006526">
    <property type="term" value="P:L-arginine biosynthetic process"/>
    <property type="evidence" value="ECO:0007669"/>
    <property type="project" value="UniProtKB-UniRule"/>
</dbReference>
<dbReference type="CDD" id="cd01359">
    <property type="entry name" value="Argininosuccinate_lyase"/>
    <property type="match status" value="1"/>
</dbReference>
<dbReference type="FunFam" id="1.10.40.30:FF:000001">
    <property type="entry name" value="Argininosuccinate lyase"/>
    <property type="match status" value="1"/>
</dbReference>
<dbReference type="FunFam" id="1.20.200.10:FF:000015">
    <property type="entry name" value="argininosuccinate lyase isoform X2"/>
    <property type="match status" value="1"/>
</dbReference>
<dbReference type="Gene3D" id="1.10.40.30">
    <property type="entry name" value="Fumarase/aspartase (C-terminal domain)"/>
    <property type="match status" value="1"/>
</dbReference>
<dbReference type="Gene3D" id="1.20.200.10">
    <property type="entry name" value="Fumarase/aspartase (Central domain)"/>
    <property type="match status" value="1"/>
</dbReference>
<dbReference type="Gene3D" id="1.10.275.10">
    <property type="entry name" value="Fumarase/aspartase (N-terminal domain)"/>
    <property type="match status" value="1"/>
</dbReference>
<dbReference type="HAMAP" id="MF_00006">
    <property type="entry name" value="Arg_succ_lyase"/>
    <property type="match status" value="1"/>
</dbReference>
<dbReference type="InterPro" id="IPR029419">
    <property type="entry name" value="Arg_succ_lyase_C"/>
</dbReference>
<dbReference type="InterPro" id="IPR009049">
    <property type="entry name" value="Argininosuccinate_lyase"/>
</dbReference>
<dbReference type="InterPro" id="IPR024083">
    <property type="entry name" value="Fumarase/histidase_N"/>
</dbReference>
<dbReference type="InterPro" id="IPR020557">
    <property type="entry name" value="Fumarate_lyase_CS"/>
</dbReference>
<dbReference type="InterPro" id="IPR000362">
    <property type="entry name" value="Fumarate_lyase_fam"/>
</dbReference>
<dbReference type="InterPro" id="IPR022761">
    <property type="entry name" value="Fumarate_lyase_N"/>
</dbReference>
<dbReference type="InterPro" id="IPR008948">
    <property type="entry name" value="L-Aspartase-like"/>
</dbReference>
<dbReference type="NCBIfam" id="TIGR00838">
    <property type="entry name" value="argH"/>
    <property type="match status" value="1"/>
</dbReference>
<dbReference type="PANTHER" id="PTHR43814">
    <property type="entry name" value="ARGININOSUCCINATE LYASE"/>
    <property type="match status" value="1"/>
</dbReference>
<dbReference type="PANTHER" id="PTHR43814:SF1">
    <property type="entry name" value="ARGININOSUCCINATE LYASE"/>
    <property type="match status" value="1"/>
</dbReference>
<dbReference type="Pfam" id="PF14698">
    <property type="entry name" value="ASL_C2"/>
    <property type="match status" value="1"/>
</dbReference>
<dbReference type="Pfam" id="PF00206">
    <property type="entry name" value="Lyase_1"/>
    <property type="match status" value="1"/>
</dbReference>
<dbReference type="PRINTS" id="PR00145">
    <property type="entry name" value="ARGSUCLYASE"/>
</dbReference>
<dbReference type="PRINTS" id="PR00149">
    <property type="entry name" value="FUMRATELYASE"/>
</dbReference>
<dbReference type="SUPFAM" id="SSF48557">
    <property type="entry name" value="L-aspartase-like"/>
    <property type="match status" value="1"/>
</dbReference>
<dbReference type="PROSITE" id="PS00163">
    <property type="entry name" value="FUMARATE_LYASES"/>
    <property type="match status" value="1"/>
</dbReference>
<proteinExistence type="inferred from homology"/>
<feature type="chain" id="PRO_1000089096" description="Argininosuccinate lyase">
    <location>
        <begin position="1"/>
        <end position="473"/>
    </location>
</feature>